<gene>
    <name evidence="5" type="ordered locus">Rxyl_2847</name>
</gene>
<reference key="1">
    <citation type="journal article" date="2013" name="BMC Syst. Biol.">
        <title>Identifying reaction modules in metabolic pathways: bioinformatic deduction and experimental validation of a new putative route in purine catabolism.</title>
        <authorList>
            <person name="Barba M."/>
            <person name="Dutoit R."/>
            <person name="Legrain C."/>
            <person name="Labedan B."/>
        </authorList>
    </citation>
    <scope>NUCLEOTIDE SEQUENCE [GENOMIC DNA]</scope>
    <scope>FUNCTION</scope>
    <scope>CATALYTIC ACTIVITY</scope>
    <scope>BIOPHYSICOCHEMICAL PROPERTIES</scope>
    <scope>SUBUNIT</scope>
    <source>
        <strain>DSM 9941 / JCM 11954 / NBRC 16129 / PRD-1</strain>
    </source>
</reference>
<reference key="2">
    <citation type="submission" date="2006-06" db="EMBL/GenBank/DDBJ databases">
        <title>Complete sequence of Rubrobacter xylanophilus DSM 9941.</title>
        <authorList>
            <consortium name="US DOE Joint Genome Institute"/>
            <person name="Copeland A."/>
            <person name="Lucas S."/>
            <person name="Lapidus A."/>
            <person name="Barry K."/>
            <person name="Detter J.C."/>
            <person name="Glavina del Rio T."/>
            <person name="Hammon N."/>
            <person name="Israni S."/>
            <person name="Dalin E."/>
            <person name="Tice H."/>
            <person name="Pitluck S."/>
            <person name="Munk A.C."/>
            <person name="Brettin T."/>
            <person name="Bruce D."/>
            <person name="Han C."/>
            <person name="Tapia R."/>
            <person name="Gilna P."/>
            <person name="Schmutz J."/>
            <person name="Larimer F."/>
            <person name="Land M."/>
            <person name="Hauser L."/>
            <person name="Kyrpides N."/>
            <person name="Lykidis A."/>
            <person name="da Costa M.S."/>
            <person name="Rainey F.A."/>
            <person name="Empadinhas N."/>
            <person name="Jolivet E."/>
            <person name="Battista J.R."/>
            <person name="Richardson P."/>
        </authorList>
    </citation>
    <scope>NUCLEOTIDE SEQUENCE [LARGE SCALE GENOMIC DNA]</scope>
    <source>
        <strain>DSM 9941 / JCM 11954 / NBRC 16129 / PRD-1</strain>
    </source>
</reference>
<feature type="chain" id="PRO_0000457367" description="Ureidoglycine carbamoyltransferase">
    <location>
        <begin position="1"/>
        <end position="339"/>
    </location>
</feature>
<feature type="sequence conflict" description="In Ref. 1; AGE11874." evidence="3" ref="1">
    <original>N</original>
    <variation>K</variation>
    <location>
        <position position="11"/>
    </location>
</feature>
<feature type="sequence conflict" description="In Ref. 1; AGE11874." evidence="3" ref="1">
    <original>G</original>
    <variation>D</variation>
    <location>
        <position position="23"/>
    </location>
</feature>
<feature type="sequence conflict" description="In Ref. 1; AGE11874." evidence="3" ref="1">
    <original>SES</original>
    <variation>AEA</variation>
    <location>
        <begin position="141"/>
        <end position="143"/>
    </location>
</feature>
<feature type="sequence conflict" description="In Ref. 1; AGE11874." evidence="3" ref="1">
    <original>G</original>
    <variation>S</variation>
    <location>
        <position position="172"/>
    </location>
</feature>
<feature type="sequence conflict" description="In Ref. 1; AGE11874." evidence="3" ref="1">
    <original>S</original>
    <variation>K</variation>
    <location>
        <position position="211"/>
    </location>
</feature>
<feature type="sequence conflict" description="In Ref. 1; AGE11874." evidence="3" ref="1">
    <original>R</original>
    <variation>K</variation>
    <location>
        <position position="225"/>
    </location>
</feature>
<feature type="sequence conflict" description="In Ref. 1; AGE11874." evidence="3" ref="1">
    <original>VSEM</original>
    <variation>ISEV</variation>
    <location>
        <begin position="246"/>
        <end position="249"/>
    </location>
</feature>
<feature type="sequence conflict" description="In Ref. 1; AGE11874." evidence="3" ref="1">
    <original>I</original>
    <variation>V</variation>
    <location>
        <position position="322"/>
    </location>
</feature>
<protein>
    <recommendedName>
        <fullName evidence="2">Ureidoglycine carbamoyltransferase</fullName>
        <shortName evidence="2">UGTCase</shortName>
        <ecNumber evidence="1">2.1.3.16</ecNumber>
    </recommendedName>
</protein>
<evidence type="ECO:0000269" key="1">
    <source>
    </source>
</evidence>
<evidence type="ECO:0000303" key="2">
    <source>
    </source>
</evidence>
<evidence type="ECO:0000305" key="3"/>
<evidence type="ECO:0000305" key="4">
    <source>
    </source>
</evidence>
<evidence type="ECO:0000312" key="5">
    <source>
        <dbReference type="EMBL" id="ABG05759.1"/>
    </source>
</evidence>
<name>URGC_RUBXD</name>
<keyword id="KW-0659">Purine metabolism</keyword>
<keyword id="KW-1185">Reference proteome</keyword>
<keyword id="KW-0808">Transferase</keyword>
<accession>Q1AS69</accession>
<accession>L7Z523</accession>
<organism>
    <name type="scientific">Rubrobacter xylanophilus (strain DSM 9941 / JCM 11954 / NBRC 16129 / PRD-1)</name>
    <dbReference type="NCBI Taxonomy" id="266117"/>
    <lineage>
        <taxon>Bacteria</taxon>
        <taxon>Bacillati</taxon>
        <taxon>Actinomycetota</taxon>
        <taxon>Rubrobacteria</taxon>
        <taxon>Rubrobacterales</taxon>
        <taxon>Rubrobacteraceae</taxon>
        <taxon>Rubrobacter</taxon>
    </lineage>
</organism>
<sequence length="339" mass="37581">MQKEAVRDAANLPSIRSLVRAVGFEGRSLHSINDLTNDQIYALFELARALEPFHRSSVDLLRGSVMVTLFFQPSTRTRMSFETAMHRLGGAVVTEANPLVSSSAAKEESLADTMRTISKYANVIVLRHPDDVAAREGASYSESPVINGGWGDWEHPTQALLDLYTLWRTHGGVEGAKVVVATPDMVHARTGHSMAYGLARLGAEVTLASRSDYRAPEEVIEGLRRVEGAKVREVFDLDQDGFNDLVSEMDLVYLPGCSAPKGEAAEEFKKMMDEYYVRLETLEKVRESEGRIIRVTHTLPRRPGEMDLRIDDTPHQQYFEAIAYSVAIRMALVAAIVGA</sequence>
<comment type="function">
    <text evidence="1">Catalyzes the phosphorolysis of allantoate to ureidoglycine and carbamoyl phosphate (PubMed:24093154). Is likely involved in a purine degradation pathway (PubMed:24093154).</text>
</comment>
<comment type="catalytic activity">
    <reaction evidence="1">
        <text>(S)-2-ureidoglycine + carbamoyl phosphate = allantoate + phosphate + H(+)</text>
        <dbReference type="Rhea" id="RHEA:69388"/>
        <dbReference type="ChEBI" id="CHEBI:15378"/>
        <dbReference type="ChEBI" id="CHEBI:17536"/>
        <dbReference type="ChEBI" id="CHEBI:43474"/>
        <dbReference type="ChEBI" id="CHEBI:58228"/>
        <dbReference type="ChEBI" id="CHEBI:59947"/>
        <dbReference type="EC" id="2.1.3.16"/>
    </reaction>
    <physiologicalReaction direction="right-to-left" evidence="4">
        <dbReference type="Rhea" id="RHEA:69390"/>
    </physiologicalReaction>
</comment>
<comment type="biophysicochemical properties">
    <temperatureDependence>
        <text evidence="1">Thermophile. Is much more active at 60 degrees Celsius than at 30 degrees Celsius.</text>
    </temperatureDependence>
</comment>
<comment type="pathway">
    <text evidence="4">Purine metabolism.</text>
</comment>
<comment type="subunit">
    <text evidence="1">Homodimer.</text>
</comment>
<comment type="similarity">
    <text evidence="3">Belongs to the aspartate/ornithine carbamoyltransferase superfamily.</text>
</comment>
<proteinExistence type="evidence at protein level"/>
<dbReference type="EC" id="2.1.3.16" evidence="1"/>
<dbReference type="EMBL" id="JX289826">
    <property type="protein sequence ID" value="AGE11874.1"/>
    <property type="molecule type" value="Genomic_DNA"/>
</dbReference>
<dbReference type="EMBL" id="CP000386">
    <property type="protein sequence ID" value="ABG05759.1"/>
    <property type="molecule type" value="Genomic_DNA"/>
</dbReference>
<dbReference type="RefSeq" id="WP_011565768.1">
    <property type="nucleotide sequence ID" value="NC_008148.1"/>
</dbReference>
<dbReference type="SMR" id="Q1AS69"/>
<dbReference type="STRING" id="266117.Rxyl_2847"/>
<dbReference type="KEGG" id="rxy:Rxyl_2847"/>
<dbReference type="eggNOG" id="COG0540">
    <property type="taxonomic scope" value="Bacteria"/>
</dbReference>
<dbReference type="HOGENOM" id="CLU_043846_1_2_11"/>
<dbReference type="OrthoDB" id="9774690at2"/>
<dbReference type="PhylomeDB" id="Q1AS69"/>
<dbReference type="BioCyc" id="MetaCyc:MONOMER-21723"/>
<dbReference type="Proteomes" id="UP000006637">
    <property type="component" value="Chromosome"/>
</dbReference>
<dbReference type="GO" id="GO:0005829">
    <property type="term" value="C:cytosol"/>
    <property type="evidence" value="ECO:0007669"/>
    <property type="project" value="TreeGrafter"/>
</dbReference>
<dbReference type="GO" id="GO:0016597">
    <property type="term" value="F:amino acid binding"/>
    <property type="evidence" value="ECO:0007669"/>
    <property type="project" value="InterPro"/>
</dbReference>
<dbReference type="GO" id="GO:0004070">
    <property type="term" value="F:aspartate carbamoyltransferase activity"/>
    <property type="evidence" value="ECO:0007669"/>
    <property type="project" value="UniProtKB-EC"/>
</dbReference>
<dbReference type="GO" id="GO:0006520">
    <property type="term" value="P:amino acid metabolic process"/>
    <property type="evidence" value="ECO:0007669"/>
    <property type="project" value="InterPro"/>
</dbReference>
<dbReference type="GO" id="GO:0006144">
    <property type="term" value="P:purine nucleobase metabolic process"/>
    <property type="evidence" value="ECO:0007669"/>
    <property type="project" value="UniProtKB-KW"/>
</dbReference>
<dbReference type="Gene3D" id="3.40.50.1370">
    <property type="entry name" value="Aspartate/ornithine carbamoyltransferase"/>
    <property type="match status" value="2"/>
</dbReference>
<dbReference type="InterPro" id="IPR006132">
    <property type="entry name" value="Asp/Orn_carbamoyltranf_P-bd"/>
</dbReference>
<dbReference type="InterPro" id="IPR006130">
    <property type="entry name" value="Asp/Orn_carbamoylTrfase"/>
</dbReference>
<dbReference type="InterPro" id="IPR036901">
    <property type="entry name" value="Asp/Orn_carbamoylTrfase_sf"/>
</dbReference>
<dbReference type="InterPro" id="IPR006131">
    <property type="entry name" value="Asp_carbamoyltransf_Asp/Orn-bd"/>
</dbReference>
<dbReference type="PANTHER" id="PTHR45753:SF6">
    <property type="entry name" value="ASPARTATE CARBAMOYLTRANSFERASE"/>
    <property type="match status" value="1"/>
</dbReference>
<dbReference type="PANTHER" id="PTHR45753">
    <property type="entry name" value="ORNITHINE CARBAMOYLTRANSFERASE, MITOCHONDRIAL"/>
    <property type="match status" value="1"/>
</dbReference>
<dbReference type="Pfam" id="PF00185">
    <property type="entry name" value="OTCace"/>
    <property type="match status" value="1"/>
</dbReference>
<dbReference type="Pfam" id="PF02729">
    <property type="entry name" value="OTCace_N"/>
    <property type="match status" value="1"/>
</dbReference>
<dbReference type="PRINTS" id="PR00100">
    <property type="entry name" value="AOTCASE"/>
</dbReference>
<dbReference type="PRINTS" id="PR00101">
    <property type="entry name" value="ATCASE"/>
</dbReference>
<dbReference type="SUPFAM" id="SSF53671">
    <property type="entry name" value="Aspartate/ornithine carbamoyltransferase"/>
    <property type="match status" value="1"/>
</dbReference>